<gene>
    <name type="ordered locus">SP70585_0254</name>
</gene>
<protein>
    <recommendedName>
        <fullName evidence="1">UPF0473 protein SP70585_0254</fullName>
    </recommendedName>
</protein>
<feature type="chain" id="PRO_1000184998" description="UPF0473 protein SP70585_0254">
    <location>
        <begin position="1"/>
        <end position="101"/>
    </location>
</feature>
<comment type="similarity">
    <text evidence="1">Belongs to the UPF0473 family.</text>
</comment>
<organism>
    <name type="scientific">Streptococcus pneumoniae (strain 70585)</name>
    <dbReference type="NCBI Taxonomy" id="488221"/>
    <lineage>
        <taxon>Bacteria</taxon>
        <taxon>Bacillati</taxon>
        <taxon>Bacillota</taxon>
        <taxon>Bacilli</taxon>
        <taxon>Lactobacillales</taxon>
        <taxon>Streptococcaceae</taxon>
        <taxon>Streptococcus</taxon>
    </lineage>
</organism>
<proteinExistence type="inferred from homology"/>
<accession>C1CAK1</accession>
<dbReference type="EMBL" id="CP000918">
    <property type="protein sequence ID" value="ACO17160.1"/>
    <property type="molecule type" value="Genomic_DNA"/>
</dbReference>
<dbReference type="RefSeq" id="WP_000017620.1">
    <property type="nucleotide sequence ID" value="NC_012468.1"/>
</dbReference>
<dbReference type="KEGG" id="snm:SP70585_0254"/>
<dbReference type="HOGENOM" id="CLU_146610_2_1_9"/>
<dbReference type="Proteomes" id="UP000002211">
    <property type="component" value="Chromosome"/>
</dbReference>
<dbReference type="HAMAP" id="MF_01448">
    <property type="entry name" value="UPF0473"/>
    <property type="match status" value="1"/>
</dbReference>
<dbReference type="InterPro" id="IPR009711">
    <property type="entry name" value="UPF0473"/>
</dbReference>
<dbReference type="NCBIfam" id="NF010215">
    <property type="entry name" value="PRK13678.1-2"/>
    <property type="match status" value="1"/>
</dbReference>
<dbReference type="NCBIfam" id="NF010217">
    <property type="entry name" value="PRK13678.1-4"/>
    <property type="match status" value="1"/>
</dbReference>
<dbReference type="PANTHER" id="PTHR40066">
    <property type="entry name" value="UPF0473 PROTEIN CBO2561/CLC_2432"/>
    <property type="match status" value="1"/>
</dbReference>
<dbReference type="PANTHER" id="PTHR40066:SF1">
    <property type="entry name" value="UPF0473 PROTEIN CBO2561_CLC_2432"/>
    <property type="match status" value="1"/>
</dbReference>
<dbReference type="Pfam" id="PF06949">
    <property type="entry name" value="DUF1292"/>
    <property type="match status" value="1"/>
</dbReference>
<reference key="1">
    <citation type="journal article" date="2010" name="Genome Biol.">
        <title>Structure and dynamics of the pan-genome of Streptococcus pneumoniae and closely related species.</title>
        <authorList>
            <person name="Donati C."/>
            <person name="Hiller N.L."/>
            <person name="Tettelin H."/>
            <person name="Muzzi A."/>
            <person name="Croucher N.J."/>
            <person name="Angiuoli S.V."/>
            <person name="Oggioni M."/>
            <person name="Dunning Hotopp J.C."/>
            <person name="Hu F.Z."/>
            <person name="Riley D.R."/>
            <person name="Covacci A."/>
            <person name="Mitchell T.J."/>
            <person name="Bentley S.D."/>
            <person name="Kilian M."/>
            <person name="Ehrlich G.D."/>
            <person name="Rappuoli R."/>
            <person name="Moxon E.R."/>
            <person name="Masignani V."/>
        </authorList>
    </citation>
    <scope>NUCLEOTIDE SEQUENCE [LARGE SCALE GENOMIC DNA]</scope>
    <source>
        <strain>70585</strain>
    </source>
</reference>
<evidence type="ECO:0000255" key="1">
    <source>
        <dbReference type="HAMAP-Rule" id="MF_01448"/>
    </source>
</evidence>
<name>Y254_STRP7</name>
<sequence length="101" mass="11759">MSHDHNHDHEERELITLVDEQGNETLFEILLTIDGKEEFGKNYVLLVPVNAEEDEDGQVEIQAYSFIENEDGTEGELQPIPEDSEDEWNMIEEVFNSFMEE</sequence>